<gene>
    <name type="primary">CES3</name>
    <name type="ORF">UNQ869/PRO1887</name>
</gene>
<comment type="function">
    <text>Involved in the detoxification of xenobiotics and in the activation of ester and amide prodrugs. Shows low catalytic efficiency for hydrolysis of CPT-11 (7-ethyl-10-[4-(1-piperidino)-1-piperidino]-carbonyloxycamptothecin), a prodrug for camptothecin used in cancer therapeutics.</text>
</comment>
<comment type="catalytic activity">
    <reaction evidence="3">
        <text>a carboxylic ester + H2O = an alcohol + a carboxylate + H(+)</text>
        <dbReference type="Rhea" id="RHEA:21164"/>
        <dbReference type="ChEBI" id="CHEBI:15377"/>
        <dbReference type="ChEBI" id="CHEBI:15378"/>
        <dbReference type="ChEBI" id="CHEBI:29067"/>
        <dbReference type="ChEBI" id="CHEBI:30879"/>
        <dbReference type="ChEBI" id="CHEBI:33308"/>
        <dbReference type="EC" id="3.1.1.1"/>
    </reaction>
</comment>
<comment type="biophysicochemical properties">
    <kinetics>
        <KM evidence="5">137 uM for 7-ethyl-10-[4-(1-piperidino)-1-piperidino]-carbonyloxycamptothecin</KM>
        <KM evidence="5">460 uM for 7-ethyl-10-[4-(1-piperidino)-1-amino]-carbonyloxycamptothecin</KM>
    </kinetics>
</comment>
<comment type="subcellular location">
    <subcellularLocation>
        <location evidence="1">Endoplasmic reticulum lumen</location>
    </subcellularLocation>
</comment>
<comment type="alternative products">
    <event type="alternative splicing"/>
    <isoform>
        <id>Q6UWW8-1</id>
        <name>1</name>
        <sequence type="displayed"/>
    </isoform>
    <isoform>
        <id>Q6UWW8-2</id>
        <name>2</name>
        <sequence type="described" ref="VSP_044994"/>
    </isoform>
</comment>
<comment type="tissue specificity">
    <text evidence="4 5 6">Expressed in liver, colon and small intestine.</text>
</comment>
<comment type="PTM">
    <text evidence="5 7">N-glycosylated.</text>
</comment>
<comment type="similarity">
    <text evidence="10">Belongs to the type-B carboxylesterase/lipase family.</text>
</comment>
<evidence type="ECO:0000250" key="1"/>
<evidence type="ECO:0000255" key="2"/>
<evidence type="ECO:0000255" key="3">
    <source>
        <dbReference type="PROSITE-ProRule" id="PRU10039"/>
    </source>
</evidence>
<evidence type="ECO:0000269" key="4">
    <source>
    </source>
</evidence>
<evidence type="ECO:0000269" key="5">
    <source>
    </source>
</evidence>
<evidence type="ECO:0000269" key="6">
    <source>
    </source>
</evidence>
<evidence type="ECO:0000269" key="7">
    <source>
    </source>
</evidence>
<evidence type="ECO:0000269" key="8">
    <source ref="4"/>
</evidence>
<evidence type="ECO:0000303" key="9">
    <source>
    </source>
</evidence>
<evidence type="ECO:0000305" key="10"/>
<protein>
    <recommendedName>
        <fullName>Carboxylesterase 3</fullName>
        <ecNumber>3.1.1.1</ecNumber>
    </recommendedName>
    <alternativeName>
        <fullName>Liver carboxylesterase 31 homolog</fullName>
    </alternativeName>
</protein>
<reference key="1">
    <citation type="journal article" date="2004" name="Drug Metab. Dispos.">
        <title>Hydrolysis of irinotecan and its oxidative metabolites, 7-ethyl-10-[4-N-(5-aminopentanoic acid)-1-piperidino] carbonyloxycamptothecin and 7-ethyl-10-[4-(1-piperidino)-1-amino]-carbonyloxycamptothecin, by human carboxylesterases CES1A1, CES2, and a newly expressed carboxylesterase isoenzyme, CES3.</title>
        <authorList>
            <person name="Sanghani S.P."/>
            <person name="Quinney S.K."/>
            <person name="Fredenburg T.B."/>
            <person name="Davis W.I."/>
            <person name="Murry D.J."/>
            <person name="Bosron W.F."/>
        </authorList>
    </citation>
    <scope>NUCLEOTIDE SEQUENCE [MRNA] (ISOFORM 1)</scope>
    <scope>GLYCOSYLATION</scope>
    <scope>TISSUE SPECIFICITY</scope>
    <scope>BIOPHYSICOCHEMICAL PROPERTIES</scope>
    <source>
        <tissue>Liver</tissue>
    </source>
</reference>
<reference key="2">
    <citation type="journal article" date="2003" name="Genome Res.">
        <title>The secreted protein discovery initiative (SPDI), a large-scale effort to identify novel human secreted and transmembrane proteins: a bioinformatics assessment.</title>
        <authorList>
            <person name="Clark H.F."/>
            <person name="Gurney A.L."/>
            <person name="Abaya E."/>
            <person name="Baker K."/>
            <person name="Baldwin D.T."/>
            <person name="Brush J."/>
            <person name="Chen J."/>
            <person name="Chow B."/>
            <person name="Chui C."/>
            <person name="Crowley C."/>
            <person name="Currell B."/>
            <person name="Deuel B."/>
            <person name="Dowd P."/>
            <person name="Eaton D."/>
            <person name="Foster J.S."/>
            <person name="Grimaldi C."/>
            <person name="Gu Q."/>
            <person name="Hass P.E."/>
            <person name="Heldens S."/>
            <person name="Huang A."/>
            <person name="Kim H.S."/>
            <person name="Klimowski L."/>
            <person name="Jin Y."/>
            <person name="Johnson S."/>
            <person name="Lee J."/>
            <person name="Lewis L."/>
            <person name="Liao D."/>
            <person name="Mark M.R."/>
            <person name="Robbie E."/>
            <person name="Sanchez C."/>
            <person name="Schoenfeld J."/>
            <person name="Seshagiri S."/>
            <person name="Simmons L."/>
            <person name="Singh J."/>
            <person name="Smith V."/>
            <person name="Stinson J."/>
            <person name="Vagts A."/>
            <person name="Vandlen R.L."/>
            <person name="Watanabe C."/>
            <person name="Wieand D."/>
            <person name="Woods K."/>
            <person name="Xie M.-H."/>
            <person name="Yansura D.G."/>
            <person name="Yi S."/>
            <person name="Yu G."/>
            <person name="Yuan J."/>
            <person name="Zhang M."/>
            <person name="Zhang Z."/>
            <person name="Goddard A.D."/>
            <person name="Wood W.I."/>
            <person name="Godowski P.J."/>
            <person name="Gray A.M."/>
        </authorList>
    </citation>
    <scope>NUCLEOTIDE SEQUENCE [LARGE SCALE MRNA] (ISOFORM 1)</scope>
</reference>
<reference key="3">
    <citation type="journal article" date="2004" name="Nat. Genet.">
        <title>Complete sequencing and characterization of 21,243 full-length human cDNAs.</title>
        <authorList>
            <person name="Ota T."/>
            <person name="Suzuki Y."/>
            <person name="Nishikawa T."/>
            <person name="Otsuki T."/>
            <person name="Sugiyama T."/>
            <person name="Irie R."/>
            <person name="Wakamatsu A."/>
            <person name="Hayashi K."/>
            <person name="Sato H."/>
            <person name="Nagai K."/>
            <person name="Kimura K."/>
            <person name="Makita H."/>
            <person name="Sekine M."/>
            <person name="Obayashi M."/>
            <person name="Nishi T."/>
            <person name="Shibahara T."/>
            <person name="Tanaka T."/>
            <person name="Ishii S."/>
            <person name="Yamamoto J."/>
            <person name="Saito K."/>
            <person name="Kawai Y."/>
            <person name="Isono Y."/>
            <person name="Nakamura Y."/>
            <person name="Nagahari K."/>
            <person name="Murakami K."/>
            <person name="Yasuda T."/>
            <person name="Iwayanagi T."/>
            <person name="Wagatsuma M."/>
            <person name="Shiratori A."/>
            <person name="Sudo H."/>
            <person name="Hosoiri T."/>
            <person name="Kaku Y."/>
            <person name="Kodaira H."/>
            <person name="Kondo H."/>
            <person name="Sugawara M."/>
            <person name="Takahashi M."/>
            <person name="Kanda K."/>
            <person name="Yokoi T."/>
            <person name="Furuya T."/>
            <person name="Kikkawa E."/>
            <person name="Omura Y."/>
            <person name="Abe K."/>
            <person name="Kamihara K."/>
            <person name="Katsuta N."/>
            <person name="Sato K."/>
            <person name="Tanikawa M."/>
            <person name="Yamazaki M."/>
            <person name="Ninomiya K."/>
            <person name="Ishibashi T."/>
            <person name="Yamashita H."/>
            <person name="Murakawa K."/>
            <person name="Fujimori K."/>
            <person name="Tanai H."/>
            <person name="Kimata M."/>
            <person name="Watanabe M."/>
            <person name="Hiraoka S."/>
            <person name="Chiba Y."/>
            <person name="Ishida S."/>
            <person name="Ono Y."/>
            <person name="Takiguchi S."/>
            <person name="Watanabe S."/>
            <person name="Yosida M."/>
            <person name="Hotuta T."/>
            <person name="Kusano J."/>
            <person name="Kanehori K."/>
            <person name="Takahashi-Fujii A."/>
            <person name="Hara H."/>
            <person name="Tanase T.-O."/>
            <person name="Nomura Y."/>
            <person name="Togiya S."/>
            <person name="Komai F."/>
            <person name="Hara R."/>
            <person name="Takeuchi K."/>
            <person name="Arita M."/>
            <person name="Imose N."/>
            <person name="Musashino K."/>
            <person name="Yuuki H."/>
            <person name="Oshima A."/>
            <person name="Sasaki N."/>
            <person name="Aotsuka S."/>
            <person name="Yoshikawa Y."/>
            <person name="Matsunawa H."/>
            <person name="Ichihara T."/>
            <person name="Shiohata N."/>
            <person name="Sano S."/>
            <person name="Moriya S."/>
            <person name="Momiyama H."/>
            <person name="Satoh N."/>
            <person name="Takami S."/>
            <person name="Terashima Y."/>
            <person name="Suzuki O."/>
            <person name="Nakagawa S."/>
            <person name="Senoh A."/>
            <person name="Mizoguchi H."/>
            <person name="Goto Y."/>
            <person name="Shimizu F."/>
            <person name="Wakebe H."/>
            <person name="Hishigaki H."/>
            <person name="Watanabe T."/>
            <person name="Sugiyama A."/>
            <person name="Takemoto M."/>
            <person name="Kawakami B."/>
            <person name="Yamazaki M."/>
            <person name="Watanabe K."/>
            <person name="Kumagai A."/>
            <person name="Itakura S."/>
            <person name="Fukuzumi Y."/>
            <person name="Fujimori Y."/>
            <person name="Komiyama M."/>
            <person name="Tashiro H."/>
            <person name="Tanigami A."/>
            <person name="Fujiwara T."/>
            <person name="Ono T."/>
            <person name="Yamada K."/>
            <person name="Fujii Y."/>
            <person name="Ozaki K."/>
            <person name="Hirao M."/>
            <person name="Ohmori Y."/>
            <person name="Kawabata A."/>
            <person name="Hikiji T."/>
            <person name="Kobatake N."/>
            <person name="Inagaki H."/>
            <person name="Ikema Y."/>
            <person name="Okamoto S."/>
            <person name="Okitani R."/>
            <person name="Kawakami T."/>
            <person name="Noguchi S."/>
            <person name="Itoh T."/>
            <person name="Shigeta K."/>
            <person name="Senba T."/>
            <person name="Matsumura K."/>
            <person name="Nakajima Y."/>
            <person name="Mizuno T."/>
            <person name="Morinaga M."/>
            <person name="Sasaki M."/>
            <person name="Togashi T."/>
            <person name="Oyama M."/>
            <person name="Hata H."/>
            <person name="Watanabe M."/>
            <person name="Komatsu T."/>
            <person name="Mizushima-Sugano J."/>
            <person name="Satoh T."/>
            <person name="Shirai Y."/>
            <person name="Takahashi Y."/>
            <person name="Nakagawa K."/>
            <person name="Okumura K."/>
            <person name="Nagase T."/>
            <person name="Nomura N."/>
            <person name="Kikuchi H."/>
            <person name="Masuho Y."/>
            <person name="Yamashita R."/>
            <person name="Nakai K."/>
            <person name="Yada T."/>
            <person name="Nakamura Y."/>
            <person name="Ohara O."/>
            <person name="Isogai T."/>
            <person name="Sugano S."/>
        </authorList>
    </citation>
    <scope>NUCLEOTIDE SEQUENCE [LARGE SCALE MRNA] (ISOFORM 2)</scope>
    <source>
        <tissue>Colon mucosa</tissue>
    </source>
</reference>
<reference key="4">
    <citation type="submission" date="2008-03" db="EMBL/GenBank/DDBJ databases">
        <authorList>
            <consortium name="NIEHS SNPs program"/>
        </authorList>
    </citation>
    <scope>NUCLEOTIDE SEQUENCE [GENOMIC DNA]</scope>
    <scope>VARIANTS ILE-129; THR-151; HIS-160; LYS-191; ASN-213; TRP-367; VAL-523 AND VAL-555</scope>
</reference>
<reference key="5">
    <citation type="journal article" date="2004" name="Nature">
        <title>The sequence and analysis of duplication-rich human chromosome 16.</title>
        <authorList>
            <person name="Martin J."/>
            <person name="Han C."/>
            <person name="Gordon L.A."/>
            <person name="Terry A."/>
            <person name="Prabhakar S."/>
            <person name="She X."/>
            <person name="Xie G."/>
            <person name="Hellsten U."/>
            <person name="Chan Y.M."/>
            <person name="Altherr M."/>
            <person name="Couronne O."/>
            <person name="Aerts A."/>
            <person name="Bajorek E."/>
            <person name="Black S."/>
            <person name="Blumer H."/>
            <person name="Branscomb E."/>
            <person name="Brown N.C."/>
            <person name="Bruno W.J."/>
            <person name="Buckingham J.M."/>
            <person name="Callen D.F."/>
            <person name="Campbell C.S."/>
            <person name="Campbell M.L."/>
            <person name="Campbell E.W."/>
            <person name="Caoile C."/>
            <person name="Challacombe J.F."/>
            <person name="Chasteen L.A."/>
            <person name="Chertkov O."/>
            <person name="Chi H.C."/>
            <person name="Christensen M."/>
            <person name="Clark L.M."/>
            <person name="Cohn J.D."/>
            <person name="Denys M."/>
            <person name="Detter J.C."/>
            <person name="Dickson M."/>
            <person name="Dimitrijevic-Bussod M."/>
            <person name="Escobar J."/>
            <person name="Fawcett J.J."/>
            <person name="Flowers D."/>
            <person name="Fotopulos D."/>
            <person name="Glavina T."/>
            <person name="Gomez M."/>
            <person name="Gonzales E."/>
            <person name="Goodstein D."/>
            <person name="Goodwin L.A."/>
            <person name="Grady D.L."/>
            <person name="Grigoriev I."/>
            <person name="Groza M."/>
            <person name="Hammon N."/>
            <person name="Hawkins T."/>
            <person name="Haydu L."/>
            <person name="Hildebrand C.E."/>
            <person name="Huang W."/>
            <person name="Israni S."/>
            <person name="Jett J."/>
            <person name="Jewett P.B."/>
            <person name="Kadner K."/>
            <person name="Kimball H."/>
            <person name="Kobayashi A."/>
            <person name="Krawczyk M.-C."/>
            <person name="Leyba T."/>
            <person name="Longmire J.L."/>
            <person name="Lopez F."/>
            <person name="Lou Y."/>
            <person name="Lowry S."/>
            <person name="Ludeman T."/>
            <person name="Manohar C.F."/>
            <person name="Mark G.A."/>
            <person name="McMurray K.L."/>
            <person name="Meincke L.J."/>
            <person name="Morgan J."/>
            <person name="Moyzis R.K."/>
            <person name="Mundt M.O."/>
            <person name="Munk A.C."/>
            <person name="Nandkeshwar R.D."/>
            <person name="Pitluck S."/>
            <person name="Pollard M."/>
            <person name="Predki P."/>
            <person name="Parson-Quintana B."/>
            <person name="Ramirez L."/>
            <person name="Rash S."/>
            <person name="Retterer J."/>
            <person name="Ricke D.O."/>
            <person name="Robinson D.L."/>
            <person name="Rodriguez A."/>
            <person name="Salamov A."/>
            <person name="Saunders E.H."/>
            <person name="Scott D."/>
            <person name="Shough T."/>
            <person name="Stallings R.L."/>
            <person name="Stalvey M."/>
            <person name="Sutherland R.D."/>
            <person name="Tapia R."/>
            <person name="Tesmer J.G."/>
            <person name="Thayer N."/>
            <person name="Thompson L.S."/>
            <person name="Tice H."/>
            <person name="Torney D.C."/>
            <person name="Tran-Gyamfi M."/>
            <person name="Tsai M."/>
            <person name="Ulanovsky L.E."/>
            <person name="Ustaszewska A."/>
            <person name="Vo N."/>
            <person name="White P.S."/>
            <person name="Williams A.L."/>
            <person name="Wills P.L."/>
            <person name="Wu J.-R."/>
            <person name="Wu K."/>
            <person name="Yang J."/>
            <person name="DeJong P."/>
            <person name="Bruce D."/>
            <person name="Doggett N.A."/>
            <person name="Deaven L."/>
            <person name="Schmutz J."/>
            <person name="Grimwood J."/>
            <person name="Richardson P."/>
            <person name="Rokhsar D.S."/>
            <person name="Eichler E.E."/>
            <person name="Gilna P."/>
            <person name="Lucas S.M."/>
            <person name="Myers R.M."/>
            <person name="Rubin E.M."/>
            <person name="Pennacchio L.A."/>
        </authorList>
    </citation>
    <scope>NUCLEOTIDE SEQUENCE [LARGE SCALE GENOMIC DNA]</scope>
</reference>
<reference key="6">
    <citation type="submission" date="2005-07" db="EMBL/GenBank/DDBJ databases">
        <authorList>
            <person name="Mural R.J."/>
            <person name="Istrail S."/>
            <person name="Sutton G.G."/>
            <person name="Florea L."/>
            <person name="Halpern A.L."/>
            <person name="Mobarry C.M."/>
            <person name="Lippert R."/>
            <person name="Walenz B."/>
            <person name="Shatkay H."/>
            <person name="Dew I."/>
            <person name="Miller J.R."/>
            <person name="Flanigan M.J."/>
            <person name="Edwards N.J."/>
            <person name="Bolanos R."/>
            <person name="Fasulo D."/>
            <person name="Halldorsson B.V."/>
            <person name="Hannenhalli S."/>
            <person name="Turner R."/>
            <person name="Yooseph S."/>
            <person name="Lu F."/>
            <person name="Nusskern D.R."/>
            <person name="Shue B.C."/>
            <person name="Zheng X.H."/>
            <person name="Zhong F."/>
            <person name="Delcher A.L."/>
            <person name="Huson D.H."/>
            <person name="Kravitz S.A."/>
            <person name="Mouchard L."/>
            <person name="Reinert K."/>
            <person name="Remington K.A."/>
            <person name="Clark A.G."/>
            <person name="Waterman M.S."/>
            <person name="Eichler E.E."/>
            <person name="Adams M.D."/>
            <person name="Hunkapiller M.W."/>
            <person name="Myers E.W."/>
            <person name="Venter J.C."/>
        </authorList>
    </citation>
    <scope>NUCLEOTIDE SEQUENCE [LARGE SCALE GENOMIC DNA]</scope>
</reference>
<reference key="7">
    <citation type="journal article" date="2004" name="Genome Res.">
        <title>The status, quality, and expansion of the NIH full-length cDNA project: the Mammalian Gene Collection (MGC).</title>
        <authorList>
            <consortium name="The MGC Project Team"/>
        </authorList>
    </citation>
    <scope>NUCLEOTIDE SEQUENCE [LARGE SCALE MRNA] (ISOFORM 1)</scope>
    <source>
        <tissue>Eye</tissue>
    </source>
</reference>
<reference key="8">
    <citation type="journal article" date="2003" name="Clin. Cancer Res.">
        <title>Carboxylesterases expressed in human colon tumor tissue and their role in CPT-11 hydrolysis.</title>
        <authorList>
            <person name="Sanghani S.P."/>
            <person name="Quinney S.K."/>
            <person name="Fredenburg T.B."/>
            <person name="Sun Z."/>
            <person name="Davis W.I."/>
            <person name="Murry D.J."/>
            <person name="Cummings O.W."/>
            <person name="Seitz D.E."/>
            <person name="Bosron W.F."/>
        </authorList>
    </citation>
    <scope>TISSUE SPECIFICITY</scope>
</reference>
<reference key="9">
    <citation type="journal article" date="2005" name="J. Pharmacol. Exp. Ther.">
        <title>Hydrolysis of capecitabine to 5'-deoxy-5-fluorocytidine by human carboxylesterases and inhibition by loperamide.</title>
        <authorList>
            <person name="Quinney S.K."/>
            <person name="Sanghani S.P."/>
            <person name="Davis W.I."/>
            <person name="Hurley T.D."/>
            <person name="Sun Z."/>
            <person name="Murry D.J."/>
            <person name="Bosron W.F."/>
        </authorList>
    </citation>
    <scope>TISSUE SPECIFICITY</scope>
</reference>
<reference key="10">
    <citation type="journal article" date="2009" name="J. Proteome Res.">
        <title>Glycoproteomics analysis of human liver tissue by combination of multiple enzyme digestion and hydrazide chemistry.</title>
        <authorList>
            <person name="Chen R."/>
            <person name="Jiang X."/>
            <person name="Sun D."/>
            <person name="Han G."/>
            <person name="Wang F."/>
            <person name="Ye M."/>
            <person name="Wang L."/>
            <person name="Zou H."/>
        </authorList>
    </citation>
    <scope>GLYCOSYLATION [LARGE SCALE ANALYSIS] AT ASN-105</scope>
    <source>
        <tissue>Liver</tissue>
    </source>
</reference>
<dbReference type="EC" id="3.1.1.1"/>
<dbReference type="EMBL" id="AY358609">
    <property type="protein sequence ID" value="AAQ88972.1"/>
    <property type="molecule type" value="mRNA"/>
</dbReference>
<dbReference type="EMBL" id="AK025389">
    <property type="protein sequence ID" value="BAB15123.1"/>
    <property type="molecule type" value="mRNA"/>
</dbReference>
<dbReference type="EMBL" id="EU595874">
    <property type="protein sequence ID" value="ACD11491.1"/>
    <property type="molecule type" value="Genomic_DNA"/>
</dbReference>
<dbReference type="EMBL" id="AC009084">
    <property type="status" value="NOT_ANNOTATED_CDS"/>
    <property type="molecule type" value="Genomic_DNA"/>
</dbReference>
<dbReference type="EMBL" id="CH471092">
    <property type="protein sequence ID" value="EAW83060.1"/>
    <property type="molecule type" value="Genomic_DNA"/>
</dbReference>
<dbReference type="EMBL" id="BC053670">
    <property type="protein sequence ID" value="AAH53670.1"/>
    <property type="molecule type" value="mRNA"/>
</dbReference>
<dbReference type="CCDS" id="CCDS10826.1">
    <molecule id="Q6UWW8-1"/>
</dbReference>
<dbReference type="CCDS" id="CCDS54023.1">
    <molecule id="Q6UWW8-2"/>
</dbReference>
<dbReference type="RefSeq" id="NP_001172105.1">
    <molecule id="Q6UWW8-2"/>
    <property type="nucleotide sequence ID" value="NM_001185176.2"/>
</dbReference>
<dbReference type="RefSeq" id="NP_001172106.1">
    <property type="nucleotide sequence ID" value="NM_001185177.1"/>
</dbReference>
<dbReference type="RefSeq" id="NP_079198.2">
    <molecule id="Q6UWW8-1"/>
    <property type="nucleotide sequence ID" value="NM_024922.5"/>
</dbReference>
<dbReference type="SMR" id="Q6UWW8"/>
<dbReference type="BioGRID" id="117043">
    <property type="interactions" value="20"/>
</dbReference>
<dbReference type="FunCoup" id="Q6UWW8">
    <property type="interactions" value="256"/>
</dbReference>
<dbReference type="IntAct" id="Q6UWW8">
    <property type="interactions" value="13"/>
</dbReference>
<dbReference type="STRING" id="9606.ENSP00000304782"/>
<dbReference type="ESTHER" id="human-CES3">
    <property type="family name" value="Carb_B_Chordata"/>
</dbReference>
<dbReference type="MEROPS" id="S09.958"/>
<dbReference type="GlyCosmos" id="Q6UWW8">
    <property type="glycosylation" value="1 site, No reported glycans"/>
</dbReference>
<dbReference type="GlyGen" id="Q6UWW8">
    <property type="glycosylation" value="2 sites, 5 N-linked glycans (1 site), 1 O-linked glycan (1 site)"/>
</dbReference>
<dbReference type="iPTMnet" id="Q6UWW8"/>
<dbReference type="PhosphoSitePlus" id="Q6UWW8"/>
<dbReference type="BioMuta" id="CES3"/>
<dbReference type="DMDM" id="74758561"/>
<dbReference type="jPOST" id="Q6UWW8"/>
<dbReference type="MassIVE" id="Q6UWW8"/>
<dbReference type="PaxDb" id="9606-ENSP00000304782"/>
<dbReference type="PeptideAtlas" id="Q6UWW8"/>
<dbReference type="ProteomicsDB" id="25850"/>
<dbReference type="ProteomicsDB" id="67533">
    <molecule id="Q6UWW8-1"/>
</dbReference>
<dbReference type="Antibodypedia" id="29363">
    <property type="antibodies" value="147 antibodies from 25 providers"/>
</dbReference>
<dbReference type="DNASU" id="23491"/>
<dbReference type="Ensembl" id="ENST00000303334.9">
    <molecule id="Q6UWW8-1"/>
    <property type="protein sequence ID" value="ENSP00000304782.4"/>
    <property type="gene ID" value="ENSG00000172828.13"/>
</dbReference>
<dbReference type="Ensembl" id="ENST00000543856.1">
    <molecule id="Q6UWW8-2"/>
    <property type="protein sequence ID" value="ENSP00000445559.1"/>
    <property type="gene ID" value="ENSG00000172828.13"/>
</dbReference>
<dbReference type="GeneID" id="23491"/>
<dbReference type="KEGG" id="hsa:23491"/>
<dbReference type="MANE-Select" id="ENST00000303334.9">
    <property type="protein sequence ID" value="ENSP00000304782.4"/>
    <property type="RefSeq nucleotide sequence ID" value="NM_024922.6"/>
    <property type="RefSeq protein sequence ID" value="NP_079198.2"/>
</dbReference>
<dbReference type="UCSC" id="uc002eqt.4">
    <molecule id="Q6UWW8-1"/>
    <property type="organism name" value="human"/>
</dbReference>
<dbReference type="AGR" id="HGNC:1865"/>
<dbReference type="CTD" id="23491"/>
<dbReference type="DisGeNET" id="23491"/>
<dbReference type="GeneCards" id="CES3"/>
<dbReference type="HGNC" id="HGNC:1865">
    <property type="gene designation" value="CES3"/>
</dbReference>
<dbReference type="HPA" id="ENSG00000172828">
    <property type="expression patterns" value="Tissue enhanced (intestine, liver, skeletal muscle)"/>
</dbReference>
<dbReference type="MIM" id="605279">
    <property type="type" value="gene"/>
</dbReference>
<dbReference type="neXtProt" id="NX_Q6UWW8"/>
<dbReference type="OpenTargets" id="ENSG00000172828"/>
<dbReference type="PharmGKB" id="PA26418"/>
<dbReference type="VEuPathDB" id="HostDB:ENSG00000172828"/>
<dbReference type="eggNOG" id="KOG1516">
    <property type="taxonomic scope" value="Eukaryota"/>
</dbReference>
<dbReference type="GeneTree" id="ENSGT00940000155200"/>
<dbReference type="HOGENOM" id="CLU_006586_2_1_1"/>
<dbReference type="InParanoid" id="Q6UWW8"/>
<dbReference type="OMA" id="WLIPKGW"/>
<dbReference type="OrthoDB" id="3200163at2759"/>
<dbReference type="PAN-GO" id="Q6UWW8">
    <property type="GO annotations" value="0 GO annotations based on evolutionary models"/>
</dbReference>
<dbReference type="PhylomeDB" id="Q6UWW8"/>
<dbReference type="TreeFam" id="TF315470"/>
<dbReference type="BioCyc" id="MetaCyc:HS10576-MONOMER"/>
<dbReference type="PathwayCommons" id="Q6UWW8"/>
<dbReference type="Reactome" id="R-HSA-211945">
    <property type="pathway name" value="Phase I - Functionalization of compounds"/>
</dbReference>
<dbReference type="Reactome" id="R-HSA-8964038">
    <property type="pathway name" value="LDL clearance"/>
</dbReference>
<dbReference type="SABIO-RK" id="Q6UWW8"/>
<dbReference type="SignaLink" id="Q6UWW8"/>
<dbReference type="BioGRID-ORCS" id="23491">
    <property type="hits" value="11 hits in 1154 CRISPR screens"/>
</dbReference>
<dbReference type="GeneWiki" id="Carboxylesterase_3"/>
<dbReference type="GenomeRNAi" id="23491"/>
<dbReference type="Pharos" id="Q6UWW8">
    <property type="development level" value="Tbio"/>
</dbReference>
<dbReference type="PRO" id="PR:Q6UWW8"/>
<dbReference type="Proteomes" id="UP000005640">
    <property type="component" value="Chromosome 16"/>
</dbReference>
<dbReference type="RNAct" id="Q6UWW8">
    <property type="molecule type" value="protein"/>
</dbReference>
<dbReference type="Bgee" id="ENSG00000172828">
    <property type="expression patterns" value="Expressed in mucosa of transverse colon and 107 other cell types or tissues"/>
</dbReference>
<dbReference type="ExpressionAtlas" id="Q6UWW8">
    <property type="expression patterns" value="baseline and differential"/>
</dbReference>
<dbReference type="GO" id="GO:0005829">
    <property type="term" value="C:cytosol"/>
    <property type="evidence" value="ECO:0000304"/>
    <property type="project" value="Reactome"/>
</dbReference>
<dbReference type="GO" id="GO:0005788">
    <property type="term" value="C:endoplasmic reticulum lumen"/>
    <property type="evidence" value="ECO:0007669"/>
    <property type="project" value="UniProtKB-SubCell"/>
</dbReference>
<dbReference type="GO" id="GO:0070062">
    <property type="term" value="C:extracellular exosome"/>
    <property type="evidence" value="ECO:0007005"/>
    <property type="project" value="UniProtKB"/>
</dbReference>
<dbReference type="GO" id="GO:0106435">
    <property type="term" value="F:carboxylesterase activity"/>
    <property type="evidence" value="ECO:0007669"/>
    <property type="project" value="UniProtKB-EC"/>
</dbReference>
<dbReference type="GO" id="GO:0052689">
    <property type="term" value="F:carboxylic ester hydrolase activity"/>
    <property type="evidence" value="ECO:0000304"/>
    <property type="project" value="Reactome"/>
</dbReference>
<dbReference type="GO" id="GO:0034383">
    <property type="term" value="P:low-density lipoprotein particle clearance"/>
    <property type="evidence" value="ECO:0000304"/>
    <property type="project" value="Reactome"/>
</dbReference>
<dbReference type="GO" id="GO:0006805">
    <property type="term" value="P:xenobiotic metabolic process"/>
    <property type="evidence" value="ECO:0000304"/>
    <property type="project" value="Reactome"/>
</dbReference>
<dbReference type="CDD" id="cd00312">
    <property type="entry name" value="Esterase_lipase"/>
    <property type="match status" value="1"/>
</dbReference>
<dbReference type="FunFam" id="3.40.50.1820:FF:000011">
    <property type="entry name" value="Carboxylic ester hydrolase"/>
    <property type="match status" value="1"/>
</dbReference>
<dbReference type="Gene3D" id="3.40.50.1820">
    <property type="entry name" value="alpha/beta hydrolase"/>
    <property type="match status" value="1"/>
</dbReference>
<dbReference type="InterPro" id="IPR029058">
    <property type="entry name" value="AB_hydrolase_fold"/>
</dbReference>
<dbReference type="InterPro" id="IPR002018">
    <property type="entry name" value="CarbesteraseB"/>
</dbReference>
<dbReference type="InterPro" id="IPR019826">
    <property type="entry name" value="Carboxylesterase_B_AS"/>
</dbReference>
<dbReference type="InterPro" id="IPR050309">
    <property type="entry name" value="Type-B_Carboxylest/Lipase"/>
</dbReference>
<dbReference type="PANTHER" id="PTHR11559">
    <property type="entry name" value="CARBOXYLESTERASE"/>
    <property type="match status" value="1"/>
</dbReference>
<dbReference type="Pfam" id="PF00135">
    <property type="entry name" value="COesterase"/>
    <property type="match status" value="1"/>
</dbReference>
<dbReference type="SUPFAM" id="SSF53474">
    <property type="entry name" value="alpha/beta-Hydrolases"/>
    <property type="match status" value="1"/>
</dbReference>
<dbReference type="PROSITE" id="PS00122">
    <property type="entry name" value="CARBOXYLESTERASE_B_1"/>
    <property type="match status" value="1"/>
</dbReference>
<keyword id="KW-0025">Alternative splicing</keyword>
<keyword id="KW-1015">Disulfide bond</keyword>
<keyword id="KW-0256">Endoplasmic reticulum</keyword>
<keyword id="KW-0325">Glycoprotein</keyword>
<keyword id="KW-0378">Hydrolase</keyword>
<keyword id="KW-1267">Proteomics identification</keyword>
<keyword id="KW-1185">Reference proteome</keyword>
<keyword id="KW-0719">Serine esterase</keyword>
<keyword id="KW-0732">Signal</keyword>
<name>EST3_HUMAN</name>
<organism>
    <name type="scientific">Homo sapiens</name>
    <name type="common">Human</name>
    <dbReference type="NCBI Taxonomy" id="9606"/>
    <lineage>
        <taxon>Eukaryota</taxon>
        <taxon>Metazoa</taxon>
        <taxon>Chordata</taxon>
        <taxon>Craniata</taxon>
        <taxon>Vertebrata</taxon>
        <taxon>Euteleostomi</taxon>
        <taxon>Mammalia</taxon>
        <taxon>Eutheria</taxon>
        <taxon>Euarchontoglires</taxon>
        <taxon>Primates</taxon>
        <taxon>Haplorrhini</taxon>
        <taxon>Catarrhini</taxon>
        <taxon>Hominidae</taxon>
        <taxon>Homo</taxon>
    </lineage>
</organism>
<feature type="signal peptide" evidence="2">
    <location>
        <begin position="1"/>
        <end position="26"/>
    </location>
</feature>
<feature type="chain" id="PRO_0000305191" description="Carboxylesterase 3">
    <location>
        <begin position="27"/>
        <end position="571"/>
    </location>
</feature>
<feature type="short sequence motif" description="Prevents secretion from ER" evidence="2">
    <location>
        <begin position="568"/>
        <end position="571"/>
    </location>
</feature>
<feature type="active site" description="Acyl-ester intermediate" evidence="3">
    <location>
        <position position="229"/>
    </location>
</feature>
<feature type="active site" description="Charge relay system" evidence="1">
    <location>
        <position position="347"/>
    </location>
</feature>
<feature type="active site" description="Charge relay system" evidence="1">
    <location>
        <position position="460"/>
    </location>
</feature>
<feature type="glycosylation site" description="N-linked (GlcNAc...) asparagine" evidence="7">
    <location>
        <position position="105"/>
    </location>
</feature>
<feature type="disulfide bond" evidence="1">
    <location>
        <begin position="97"/>
        <end position="124"/>
    </location>
</feature>
<feature type="disulfide bond" evidence="1">
    <location>
        <begin position="281"/>
        <end position="292"/>
    </location>
</feature>
<feature type="splice variant" id="VSP_044994" description="In isoform 2." evidence="9">
    <location>
        <begin position="1"/>
        <end position="361"/>
    </location>
</feature>
<feature type="sequence variant" id="VAR_060699" description="In dbSNP:rs61745806." evidence="8">
    <original>V</original>
    <variation>I</variation>
    <location>
        <position position="129"/>
    </location>
</feature>
<feature type="sequence variant" id="VAR_060700" description="In dbSNP:rs71647891." evidence="8">
    <original>A</original>
    <variation>T</variation>
    <location>
        <position position="151"/>
    </location>
</feature>
<feature type="sequence variant" id="VAR_060701" description="In dbSNP:rs71647892." evidence="8">
    <original>Y</original>
    <variation>H</variation>
    <location>
        <position position="160"/>
    </location>
</feature>
<feature type="sequence variant" id="VAR_060702" description="In dbSNP:rs61742964." evidence="8">
    <original>E</original>
    <variation>K</variation>
    <location>
        <position position="191"/>
    </location>
</feature>
<feature type="sequence variant" id="VAR_060703" description="In dbSNP:rs71647894." evidence="8">
    <original>I</original>
    <variation>N</variation>
    <location>
        <position position="213"/>
    </location>
</feature>
<feature type="sequence variant" id="VAR_060704" description="In dbSNP:rs61743167." evidence="8">
    <original>R</original>
    <variation>W</variation>
    <location>
        <position position="367"/>
    </location>
</feature>
<feature type="sequence variant" id="VAR_060705" description="In dbSNP:rs71649615." evidence="8">
    <original>A</original>
    <variation>V</variation>
    <location>
        <position position="523"/>
    </location>
</feature>
<feature type="sequence variant" id="VAR_060706" description="In dbSNP:rs8059252." evidence="8">
    <original>I</original>
    <variation>V</variation>
    <location>
        <position position="555"/>
    </location>
</feature>
<feature type="sequence conflict" description="In Ref. 3; BAB15123." evidence="10" ref="3">
    <original>A</original>
    <variation>S</variation>
    <location>
        <position position="372"/>
    </location>
</feature>
<feature type="sequence conflict" description="In Ref. 7; AAH53670." evidence="10" ref="7">
    <location>
        <begin position="481"/>
        <end position="483"/>
    </location>
</feature>
<sequence length="571" mass="62282">MERAVRVESGVLVGVVCLLLACPATATGPEVAQPEVDTTLGRVRGRQVGVKGTDRLVNVFLGIPFAQPPLGPDRFSAPHPAQPWEGVRDASTAPPMCLQDVESMNSSRFVLNGKQQIFSVSEDCLVLNVYSPAEVPAGSGRPVMVWVHGGALITGAATSYDGSALAAYGDVVVVTVQYRLGVLGFFSTGDEHAPGNQGFLDVVAALRWVQENIAPFGGDLNCVTVFGGSAGGSIISGLVLSPVAAGLFHRAITQSGVITTPGIIDSHPWPLAQKIANTLACSSSSPAEMVQCLQQKEGEELVLSKKLKNTIYPLTVDGTVFPKSPKELLKEKPFHSVPFLMGVNNHEFSWLIPRGWGLLDTMEQMSREDMLAISTPVLTSLDVPPEMMPTVIDEYLGSNSDAQAKCQAFQEFMGDVFINVPTVSFSRYLRDSGSPVFFYEFQHRPSSFAKIKPAWVKADHGAEGAFVFGGPFLMDESSRLAFPEATEEEKQLSLTMMAQWTHFARTGDPNSKALPPWPQFNQAEQYLEINPVPRAGQKFREAWMQFWSETLPSKIQQWHQKQKNRKAQEDL</sequence>
<accession>Q6UWW8</accession>
<accession>B2Z3W9</accession>
<accession>F5H242</accession>
<accession>Q7Z6J1</accession>
<accession>Q9H6X7</accession>
<proteinExistence type="evidence at protein level"/>